<protein>
    <recommendedName>
        <fullName>Conotoxin Cap15a</fullName>
    </recommendedName>
</protein>
<organism>
    <name type="scientific">Conus capitaneus</name>
    <name type="common">Captain cone</name>
    <dbReference type="NCBI Taxonomy" id="89439"/>
    <lineage>
        <taxon>Eukaryota</taxon>
        <taxon>Metazoa</taxon>
        <taxon>Spiralia</taxon>
        <taxon>Lophotrochozoa</taxon>
        <taxon>Mollusca</taxon>
        <taxon>Gastropoda</taxon>
        <taxon>Caenogastropoda</taxon>
        <taxon>Neogastropoda</taxon>
        <taxon>Conoidea</taxon>
        <taxon>Conidae</taxon>
        <taxon>Conus</taxon>
        <taxon>Rhizoconus</taxon>
    </lineage>
</organism>
<dbReference type="EMBL" id="GQ414740">
    <property type="protein sequence ID" value="ACV07670.1"/>
    <property type="molecule type" value="mRNA"/>
</dbReference>
<dbReference type="SMR" id="C8CK77"/>
<dbReference type="ConoServer" id="3867">
    <property type="toxin name" value="Cap15a precursor"/>
</dbReference>
<dbReference type="GO" id="GO:0005576">
    <property type="term" value="C:extracellular region"/>
    <property type="evidence" value="ECO:0007669"/>
    <property type="project" value="UniProtKB-SubCell"/>
</dbReference>
<dbReference type="GO" id="GO:0008200">
    <property type="term" value="F:ion channel inhibitor activity"/>
    <property type="evidence" value="ECO:0007669"/>
    <property type="project" value="InterPro"/>
</dbReference>
<dbReference type="GO" id="GO:0090729">
    <property type="term" value="F:toxin activity"/>
    <property type="evidence" value="ECO:0007669"/>
    <property type="project" value="UniProtKB-KW"/>
</dbReference>
<dbReference type="InterPro" id="IPR004214">
    <property type="entry name" value="Conotoxin"/>
</dbReference>
<dbReference type="Pfam" id="PF02950">
    <property type="entry name" value="Conotoxin"/>
    <property type="match status" value="1"/>
</dbReference>
<feature type="signal peptide" evidence="2">
    <location>
        <begin position="1"/>
        <end position="23"/>
    </location>
</feature>
<feature type="propeptide" id="PRO_0000392182" evidence="1">
    <location>
        <begin position="24"/>
        <end position="49"/>
    </location>
</feature>
<feature type="peptide" id="PRO_0000392183" description="Conotoxin Cap15a">
    <location>
        <begin position="50"/>
        <end position="85"/>
    </location>
</feature>
<feature type="modified residue" description="Pyrrolidone carboxylic acid" evidence="1">
    <location>
        <position position="50"/>
    </location>
</feature>
<evidence type="ECO:0000250" key="1"/>
<evidence type="ECO:0000255" key="2"/>
<evidence type="ECO:0000305" key="3"/>
<sequence length="85" mass="9503">MEKLTFLILVATVLLTIHVLVQSVGDKHLKRRPKQYATKHLSALMRGHRQCTQQGYGCDETEECCSNLSCKCSGSPLCTSSYCRP</sequence>
<accession>C8CK77</accession>
<reference key="1">
    <citation type="submission" date="2009-07" db="EMBL/GenBank/DDBJ databases">
        <title>A novel class of conotoxin cDNAs with a distinctive cysteine arrangement.</title>
        <authorList>
            <person name="Wang L."/>
            <person name="Jiang X."/>
            <person name="Wu Y."/>
            <person name="Zhou M."/>
            <person name="Xu A."/>
        </authorList>
    </citation>
    <scope>NUCLEOTIDE SEQUENCE [MRNA]</scope>
    <source>
        <tissue>Venom duct</tissue>
    </source>
</reference>
<name>CO2FA_CONCE</name>
<keyword id="KW-1015">Disulfide bond</keyword>
<keyword id="KW-0873">Pyrrolidone carboxylic acid</keyword>
<keyword id="KW-0964">Secreted</keyword>
<keyword id="KW-0732">Signal</keyword>
<keyword id="KW-0800">Toxin</keyword>
<proteinExistence type="evidence at transcript level"/>
<comment type="subcellular location">
    <subcellularLocation>
        <location evidence="1">Secreted</location>
    </subcellularLocation>
</comment>
<comment type="tissue specificity">
    <text>Expressed by the venom duct.</text>
</comment>
<comment type="domain">
    <text>The cysteine framework is XV (C-C-CC-C-C-C-C).</text>
</comment>
<comment type="PTM">
    <text evidence="1">Contains 4 disulfide bonds.</text>
</comment>
<comment type="similarity">
    <text evidence="3">Belongs to the conotoxin O2 superfamily.</text>
</comment>